<proteinExistence type="inferred from homology"/>
<reference key="1">
    <citation type="journal article" date="1988" name="J. Mol. Biol.">
        <title>Structure and organization of Marchantia polymorpha chloroplast genome. II. Gene organization of the large single copy region from rps'12 to atpB.</title>
        <authorList>
            <person name="Umesono K."/>
            <person name="Inokuchi H."/>
            <person name="Shiki Y."/>
            <person name="Takeuchi M."/>
            <person name="Chang Z."/>
            <person name="Fukuzawa H."/>
            <person name="Kohchi T."/>
            <person name="Shirai H."/>
            <person name="Ohyama K."/>
            <person name="Ozeki H."/>
        </authorList>
    </citation>
    <scope>NUCLEOTIDE SEQUENCE [GENOMIC DNA]</scope>
</reference>
<reference key="2">
    <citation type="journal article" date="1986" name="Nature">
        <title>Chloroplast gene organization deduced from complete sequence of liverwort Marchantia polymorpha chloroplast DNA.</title>
        <authorList>
            <person name="Ohyama K."/>
            <person name="Fukuzawa H."/>
            <person name="Kohchi T."/>
            <person name="Shirai H."/>
            <person name="Sano T."/>
            <person name="Sano S."/>
            <person name="Umesono K."/>
            <person name="Shiki Y."/>
            <person name="Takeuchi M."/>
            <person name="Chang Z."/>
            <person name="Aota S."/>
            <person name="Inokuchi H."/>
            <person name="Ozeki H."/>
        </authorList>
    </citation>
    <scope>NUCLEOTIDE SEQUENCE [LARGE SCALE GENOMIC DNA]</scope>
</reference>
<organism>
    <name type="scientific">Marchantia polymorpha</name>
    <name type="common">Common liverwort</name>
    <name type="synonym">Marchantia aquatica</name>
    <dbReference type="NCBI Taxonomy" id="3197"/>
    <lineage>
        <taxon>Eukaryota</taxon>
        <taxon>Viridiplantae</taxon>
        <taxon>Streptophyta</taxon>
        <taxon>Embryophyta</taxon>
        <taxon>Marchantiophyta</taxon>
        <taxon>Marchantiopsida</taxon>
        <taxon>Marchantiidae</taxon>
        <taxon>Marchantiales</taxon>
        <taxon>Marchantiaceae</taxon>
        <taxon>Marchantia</taxon>
    </lineage>
</organism>
<comment type="subcellular location">
    <subcellularLocation>
        <location evidence="1">Plastid</location>
        <location evidence="1">Chloroplast thylakoid membrane</location>
        <topology evidence="1">Single-pass membrane protein</topology>
    </subcellularLocation>
</comment>
<comment type="similarity">
    <text evidence="1">Belongs to the PsaM family.</text>
</comment>
<sequence>MTSISDSQIIVILLSVFITSILALRLGKELYQ</sequence>
<gene>
    <name evidence="1" type="primary">psaM</name>
</gene>
<keyword id="KW-0150">Chloroplast</keyword>
<keyword id="KW-0472">Membrane</keyword>
<keyword id="KW-0602">Photosynthesis</keyword>
<keyword id="KW-0603">Photosystem I</keyword>
<keyword id="KW-0934">Plastid</keyword>
<keyword id="KW-0793">Thylakoid</keyword>
<keyword id="KW-0812">Transmembrane</keyword>
<keyword id="KW-1133">Transmembrane helix</keyword>
<protein>
    <recommendedName>
        <fullName evidence="1">Photosystem I reaction center subunit XII</fullName>
    </recommendedName>
    <alternativeName>
        <fullName evidence="1">PSI-M</fullName>
    </alternativeName>
</protein>
<name>PSAM_MARPO</name>
<accession>P31590</accession>
<dbReference type="EMBL" id="X04465">
    <property type="protein sequence ID" value="CAA28071.1"/>
    <property type="molecule type" value="Genomic_DNA"/>
</dbReference>
<dbReference type="PIR" id="S01583">
    <property type="entry name" value="A05015"/>
</dbReference>
<dbReference type="RefSeq" id="NP_039285.1">
    <property type="nucleotide sequence ID" value="NC_001319.1"/>
</dbReference>
<dbReference type="SMR" id="P31590"/>
<dbReference type="GO" id="GO:0009535">
    <property type="term" value="C:chloroplast thylakoid membrane"/>
    <property type="evidence" value="ECO:0007669"/>
    <property type="project" value="UniProtKB-SubCell"/>
</dbReference>
<dbReference type="GO" id="GO:0009522">
    <property type="term" value="C:photosystem I"/>
    <property type="evidence" value="ECO:0007669"/>
    <property type="project" value="UniProtKB-KW"/>
</dbReference>
<dbReference type="GO" id="GO:0015979">
    <property type="term" value="P:photosynthesis"/>
    <property type="evidence" value="ECO:0007669"/>
    <property type="project" value="UniProtKB-UniRule"/>
</dbReference>
<dbReference type="HAMAP" id="MF_00828">
    <property type="entry name" value="PSI_PsaM"/>
    <property type="match status" value="1"/>
</dbReference>
<dbReference type="InterPro" id="IPR010010">
    <property type="entry name" value="PSI_PsaM"/>
</dbReference>
<dbReference type="InterPro" id="IPR037279">
    <property type="entry name" value="PSI_PsaM_sf"/>
</dbReference>
<dbReference type="NCBIfam" id="TIGR03053">
    <property type="entry name" value="PS_I_psaM"/>
    <property type="match status" value="1"/>
</dbReference>
<dbReference type="Pfam" id="PF07465">
    <property type="entry name" value="PsaM"/>
    <property type="match status" value="1"/>
</dbReference>
<dbReference type="SUPFAM" id="SSF81548">
    <property type="entry name" value="Subunit XII of photosystem I reaction centre, PsaM"/>
    <property type="match status" value="1"/>
</dbReference>
<geneLocation type="chloroplast"/>
<evidence type="ECO:0000255" key="1">
    <source>
        <dbReference type="HAMAP-Rule" id="MF_00828"/>
    </source>
</evidence>
<feature type="chain" id="PRO_0000207764" description="Photosystem I reaction center subunit XII">
    <location>
        <begin position="1"/>
        <end position="32"/>
    </location>
</feature>
<feature type="transmembrane region" description="Helical" evidence="1">
    <location>
        <begin position="4"/>
        <end position="26"/>
    </location>
</feature>